<evidence type="ECO:0000255" key="1">
    <source>
        <dbReference type="HAMAP-Rule" id="MF_00181"/>
    </source>
</evidence>
<organism>
    <name type="scientific">Escherichia fergusonii (strain ATCC 35469 / DSM 13698 / CCUG 18766 / IAM 14443 / JCM 21226 / LMG 7866 / NBRC 102419 / NCTC 12128 / CDC 0568-73)</name>
    <dbReference type="NCBI Taxonomy" id="585054"/>
    <lineage>
        <taxon>Bacteria</taxon>
        <taxon>Pseudomonadati</taxon>
        <taxon>Pseudomonadota</taxon>
        <taxon>Gammaproteobacteria</taxon>
        <taxon>Enterobacterales</taxon>
        <taxon>Enterobacteriaceae</taxon>
        <taxon>Escherichia</taxon>
    </lineage>
</organism>
<protein>
    <recommendedName>
        <fullName evidence="1">Probable cytosol aminopeptidase</fullName>
        <ecNumber evidence="1">3.4.11.1</ecNumber>
    </recommendedName>
    <alternativeName>
        <fullName evidence="1">Leucine aminopeptidase</fullName>
        <shortName evidence="1">LAP</shortName>
        <ecNumber evidence="1">3.4.11.10</ecNumber>
    </alternativeName>
    <alternativeName>
        <fullName evidence="1">Leucyl aminopeptidase</fullName>
    </alternativeName>
</protein>
<accession>B7LMT2</accession>
<reference key="1">
    <citation type="journal article" date="2009" name="PLoS Genet.">
        <title>Organised genome dynamics in the Escherichia coli species results in highly diverse adaptive paths.</title>
        <authorList>
            <person name="Touchon M."/>
            <person name="Hoede C."/>
            <person name="Tenaillon O."/>
            <person name="Barbe V."/>
            <person name="Baeriswyl S."/>
            <person name="Bidet P."/>
            <person name="Bingen E."/>
            <person name="Bonacorsi S."/>
            <person name="Bouchier C."/>
            <person name="Bouvet O."/>
            <person name="Calteau A."/>
            <person name="Chiapello H."/>
            <person name="Clermont O."/>
            <person name="Cruveiller S."/>
            <person name="Danchin A."/>
            <person name="Diard M."/>
            <person name="Dossat C."/>
            <person name="Karoui M.E."/>
            <person name="Frapy E."/>
            <person name="Garry L."/>
            <person name="Ghigo J.M."/>
            <person name="Gilles A.M."/>
            <person name="Johnson J."/>
            <person name="Le Bouguenec C."/>
            <person name="Lescat M."/>
            <person name="Mangenot S."/>
            <person name="Martinez-Jehanne V."/>
            <person name="Matic I."/>
            <person name="Nassif X."/>
            <person name="Oztas S."/>
            <person name="Petit M.A."/>
            <person name="Pichon C."/>
            <person name="Rouy Z."/>
            <person name="Ruf C.S."/>
            <person name="Schneider D."/>
            <person name="Tourret J."/>
            <person name="Vacherie B."/>
            <person name="Vallenet D."/>
            <person name="Medigue C."/>
            <person name="Rocha E.P.C."/>
            <person name="Denamur E."/>
        </authorList>
    </citation>
    <scope>NUCLEOTIDE SEQUENCE [LARGE SCALE GENOMIC DNA]</scope>
    <source>
        <strain>ATCC 35469 / DSM 13698 / BCRC 15582 / CCUG 18766 / IAM 14443 / JCM 21226 / LMG 7866 / NBRC 102419 / NCTC 12128 / CDC 0568-73</strain>
    </source>
</reference>
<dbReference type="EC" id="3.4.11.1" evidence="1"/>
<dbReference type="EC" id="3.4.11.10" evidence="1"/>
<dbReference type="EMBL" id="CU928158">
    <property type="protein sequence ID" value="CAQ91760.1"/>
    <property type="molecule type" value="Genomic_DNA"/>
</dbReference>
<dbReference type="RefSeq" id="WP_000397164.1">
    <property type="nucleotide sequence ID" value="NC_011740.1"/>
</dbReference>
<dbReference type="SMR" id="B7LMT2"/>
<dbReference type="MEROPS" id="M17.003"/>
<dbReference type="KEGG" id="efe:EFER_4342"/>
<dbReference type="HOGENOM" id="CLU_013734_2_2_6"/>
<dbReference type="OrthoDB" id="9809354at2"/>
<dbReference type="Proteomes" id="UP000000745">
    <property type="component" value="Chromosome"/>
</dbReference>
<dbReference type="GO" id="GO:0005737">
    <property type="term" value="C:cytoplasm"/>
    <property type="evidence" value="ECO:0007669"/>
    <property type="project" value="UniProtKB-SubCell"/>
</dbReference>
<dbReference type="GO" id="GO:0030145">
    <property type="term" value="F:manganese ion binding"/>
    <property type="evidence" value="ECO:0007669"/>
    <property type="project" value="UniProtKB-UniRule"/>
</dbReference>
<dbReference type="GO" id="GO:0070006">
    <property type="term" value="F:metalloaminopeptidase activity"/>
    <property type="evidence" value="ECO:0007669"/>
    <property type="project" value="InterPro"/>
</dbReference>
<dbReference type="GO" id="GO:0006508">
    <property type="term" value="P:proteolysis"/>
    <property type="evidence" value="ECO:0007669"/>
    <property type="project" value="UniProtKB-KW"/>
</dbReference>
<dbReference type="CDD" id="cd00433">
    <property type="entry name" value="Peptidase_M17"/>
    <property type="match status" value="1"/>
</dbReference>
<dbReference type="FunFam" id="3.40.220.10:FF:000001">
    <property type="entry name" value="Probable cytosol aminopeptidase"/>
    <property type="match status" value="1"/>
</dbReference>
<dbReference type="FunFam" id="3.40.630.10:FF:000004">
    <property type="entry name" value="Probable cytosol aminopeptidase"/>
    <property type="match status" value="1"/>
</dbReference>
<dbReference type="Gene3D" id="3.40.220.10">
    <property type="entry name" value="Leucine Aminopeptidase, subunit E, domain 1"/>
    <property type="match status" value="1"/>
</dbReference>
<dbReference type="Gene3D" id="3.40.630.10">
    <property type="entry name" value="Zn peptidases"/>
    <property type="match status" value="1"/>
</dbReference>
<dbReference type="HAMAP" id="MF_00181">
    <property type="entry name" value="Cytosol_peptidase_M17"/>
    <property type="match status" value="1"/>
</dbReference>
<dbReference type="InterPro" id="IPR011356">
    <property type="entry name" value="Leucine_aapep/pepB"/>
</dbReference>
<dbReference type="InterPro" id="IPR043472">
    <property type="entry name" value="Macro_dom-like"/>
</dbReference>
<dbReference type="InterPro" id="IPR000819">
    <property type="entry name" value="Peptidase_M17_C"/>
</dbReference>
<dbReference type="InterPro" id="IPR023042">
    <property type="entry name" value="Peptidase_M17_leu_NH2_pept"/>
</dbReference>
<dbReference type="InterPro" id="IPR008283">
    <property type="entry name" value="Peptidase_M17_N"/>
</dbReference>
<dbReference type="NCBIfam" id="NF002072">
    <property type="entry name" value="PRK00913.1-1"/>
    <property type="match status" value="1"/>
</dbReference>
<dbReference type="NCBIfam" id="NF002073">
    <property type="entry name" value="PRK00913.1-2"/>
    <property type="match status" value="1"/>
</dbReference>
<dbReference type="NCBIfam" id="NF002074">
    <property type="entry name" value="PRK00913.1-4"/>
    <property type="match status" value="1"/>
</dbReference>
<dbReference type="PANTHER" id="PTHR11963:SF23">
    <property type="entry name" value="CYTOSOL AMINOPEPTIDASE"/>
    <property type="match status" value="1"/>
</dbReference>
<dbReference type="PANTHER" id="PTHR11963">
    <property type="entry name" value="LEUCINE AMINOPEPTIDASE-RELATED"/>
    <property type="match status" value="1"/>
</dbReference>
<dbReference type="Pfam" id="PF00883">
    <property type="entry name" value="Peptidase_M17"/>
    <property type="match status" value="1"/>
</dbReference>
<dbReference type="Pfam" id="PF02789">
    <property type="entry name" value="Peptidase_M17_N"/>
    <property type="match status" value="1"/>
</dbReference>
<dbReference type="PRINTS" id="PR00481">
    <property type="entry name" value="LAMNOPPTDASE"/>
</dbReference>
<dbReference type="SUPFAM" id="SSF52949">
    <property type="entry name" value="Macro domain-like"/>
    <property type="match status" value="1"/>
</dbReference>
<dbReference type="SUPFAM" id="SSF53187">
    <property type="entry name" value="Zn-dependent exopeptidases"/>
    <property type="match status" value="1"/>
</dbReference>
<dbReference type="PROSITE" id="PS00631">
    <property type="entry name" value="CYTOSOL_AP"/>
    <property type="match status" value="1"/>
</dbReference>
<sequence length="503" mass="54820">MEFSVKSGSPEKQRSACIVVGVFEPRRLSPIAEQLDKISDGYISALLRRGELEGKPGQTLLLHHVPNVLSERILLIGCGKERELDERQYKQVIQKTINTLNDTGSMEAVCFLTELHVKGRNNYWKVRQAVETAKETLYSSDQLKTNKSEPRRPLRKMVFNVPTRRELTSGERAIQHGLAIAAGIKAAKDLGNMPPNICNAAYLASQARQLADSYSKNVITRVIGEQQMKELGMHSYLAVGQGSQNESLMSVIEYKGNASEDARPIVLVGKGLTFDSGGISIKPSEGMDEMKYDMCGAAAVYGVMRMVAELQLPINVIGVLAGCENMPGGRAYRPGDVLTTMSGQTVEVLNTDAEGRLVLCDVLTYVERFEPEAVIDVATLTGACVIALGHHITGLMANHNPLAHELIAASEQSGDRAWRLPLGDEYQEQLESNFADMANIGGRPGGAITAGCFLSRFTRKYNWAHLDIAGTAWRSGKAKGATGRPVALLAQFLLNRAGFNGEE</sequence>
<feature type="chain" id="PRO_1000118457" description="Probable cytosol aminopeptidase">
    <location>
        <begin position="1"/>
        <end position="503"/>
    </location>
</feature>
<feature type="active site" evidence="1">
    <location>
        <position position="282"/>
    </location>
</feature>
<feature type="active site" evidence="1">
    <location>
        <position position="356"/>
    </location>
</feature>
<feature type="binding site" evidence="1">
    <location>
        <position position="270"/>
    </location>
    <ligand>
        <name>Mn(2+)</name>
        <dbReference type="ChEBI" id="CHEBI:29035"/>
        <label>2</label>
    </ligand>
</feature>
<feature type="binding site" evidence="1">
    <location>
        <position position="275"/>
    </location>
    <ligand>
        <name>Mn(2+)</name>
        <dbReference type="ChEBI" id="CHEBI:29035"/>
        <label>1</label>
    </ligand>
</feature>
<feature type="binding site" evidence="1">
    <location>
        <position position="275"/>
    </location>
    <ligand>
        <name>Mn(2+)</name>
        <dbReference type="ChEBI" id="CHEBI:29035"/>
        <label>2</label>
    </ligand>
</feature>
<feature type="binding site" evidence="1">
    <location>
        <position position="293"/>
    </location>
    <ligand>
        <name>Mn(2+)</name>
        <dbReference type="ChEBI" id="CHEBI:29035"/>
        <label>2</label>
    </ligand>
</feature>
<feature type="binding site" evidence="1">
    <location>
        <position position="352"/>
    </location>
    <ligand>
        <name>Mn(2+)</name>
        <dbReference type="ChEBI" id="CHEBI:29035"/>
        <label>1</label>
    </ligand>
</feature>
<feature type="binding site" evidence="1">
    <location>
        <position position="354"/>
    </location>
    <ligand>
        <name>Mn(2+)</name>
        <dbReference type="ChEBI" id="CHEBI:29035"/>
        <label>1</label>
    </ligand>
</feature>
<feature type="binding site" evidence="1">
    <location>
        <position position="354"/>
    </location>
    <ligand>
        <name>Mn(2+)</name>
        <dbReference type="ChEBI" id="CHEBI:29035"/>
        <label>2</label>
    </ligand>
</feature>
<comment type="function">
    <text evidence="1">Presumably involved in the processing and regular turnover of intracellular proteins. Catalyzes the removal of unsubstituted N-terminal amino acids from various peptides.</text>
</comment>
<comment type="catalytic activity">
    <reaction evidence="1">
        <text>Release of an N-terminal amino acid, Xaa-|-Yaa-, in which Xaa is preferably Leu, but may be other amino acids including Pro although not Arg or Lys, and Yaa may be Pro. Amino acid amides and methyl esters are also readily hydrolyzed, but rates on arylamides are exceedingly low.</text>
        <dbReference type="EC" id="3.4.11.1"/>
    </reaction>
</comment>
<comment type="catalytic activity">
    <reaction evidence="1">
        <text>Release of an N-terminal amino acid, preferentially leucine, but not glutamic or aspartic acids.</text>
        <dbReference type="EC" id="3.4.11.10"/>
    </reaction>
</comment>
<comment type="cofactor">
    <cofactor evidence="1">
        <name>Mn(2+)</name>
        <dbReference type="ChEBI" id="CHEBI:29035"/>
    </cofactor>
    <text evidence="1">Binds 2 manganese ions per subunit.</text>
</comment>
<comment type="subcellular location">
    <subcellularLocation>
        <location evidence="1">Cytoplasm</location>
    </subcellularLocation>
</comment>
<comment type="similarity">
    <text evidence="1">Belongs to the peptidase M17 family.</text>
</comment>
<gene>
    <name evidence="1" type="primary">pepA</name>
    <name type="ordered locus">EFER_4342</name>
</gene>
<keyword id="KW-0031">Aminopeptidase</keyword>
<keyword id="KW-0963">Cytoplasm</keyword>
<keyword id="KW-0378">Hydrolase</keyword>
<keyword id="KW-0464">Manganese</keyword>
<keyword id="KW-0479">Metal-binding</keyword>
<keyword id="KW-0645">Protease</keyword>
<proteinExistence type="inferred from homology"/>
<name>AMPA_ESCF3</name>